<proteinExistence type="evidence at protein level"/>
<reference evidence="15" key="1">
    <citation type="journal article" date="2004" name="Genetics">
        <title>Drosophila crinkled, mutations of which disrupt morphogenesis and cause lethality, encodes fly myosin VIIA.</title>
        <authorList>
            <person name="Kiehart D.P."/>
            <person name="Franke J.D."/>
            <person name="Chee M.K."/>
            <person name="Montague R.A."/>
            <person name="Chen T.-L."/>
            <person name="Roote J."/>
            <person name="Ashburner M."/>
        </authorList>
    </citation>
    <scope>NUCLEOTIDE SEQUENCE [GENOMIC DNA / MRNA]</scope>
    <scope>FUNCTION</scope>
    <scope>TISSUE SPECIFICITY</scope>
    <scope>DEVELOPMENTAL STAGE</scope>
    <scope>DISRUPTION PHENOTYPE</scope>
    <source>
        <strain evidence="9">Berkeley</strain>
        <tissue evidence="9">Embryo</tissue>
    </source>
</reference>
<reference evidence="16" key="2">
    <citation type="journal article" date="2000" name="Science">
        <title>The genome sequence of Drosophila melanogaster.</title>
        <authorList>
            <person name="Adams M.D."/>
            <person name="Celniker S.E."/>
            <person name="Holt R.A."/>
            <person name="Evans C.A."/>
            <person name="Gocayne J.D."/>
            <person name="Amanatides P.G."/>
            <person name="Scherer S.E."/>
            <person name="Li P.W."/>
            <person name="Hoskins R.A."/>
            <person name="Galle R.F."/>
            <person name="George R.A."/>
            <person name="Lewis S.E."/>
            <person name="Richards S."/>
            <person name="Ashburner M."/>
            <person name="Henderson S.N."/>
            <person name="Sutton G.G."/>
            <person name="Wortman J.R."/>
            <person name="Yandell M.D."/>
            <person name="Zhang Q."/>
            <person name="Chen L.X."/>
            <person name="Brandon R.C."/>
            <person name="Rogers Y.-H.C."/>
            <person name="Blazej R.G."/>
            <person name="Champe M."/>
            <person name="Pfeiffer B.D."/>
            <person name="Wan K.H."/>
            <person name="Doyle C."/>
            <person name="Baxter E.G."/>
            <person name="Helt G."/>
            <person name="Nelson C.R."/>
            <person name="Miklos G.L.G."/>
            <person name="Abril J.F."/>
            <person name="Agbayani A."/>
            <person name="An H.-J."/>
            <person name="Andrews-Pfannkoch C."/>
            <person name="Baldwin D."/>
            <person name="Ballew R.M."/>
            <person name="Basu A."/>
            <person name="Baxendale J."/>
            <person name="Bayraktaroglu L."/>
            <person name="Beasley E.M."/>
            <person name="Beeson K.Y."/>
            <person name="Benos P.V."/>
            <person name="Berman B.P."/>
            <person name="Bhandari D."/>
            <person name="Bolshakov S."/>
            <person name="Borkova D."/>
            <person name="Botchan M.R."/>
            <person name="Bouck J."/>
            <person name="Brokstein P."/>
            <person name="Brottier P."/>
            <person name="Burtis K.C."/>
            <person name="Busam D.A."/>
            <person name="Butler H."/>
            <person name="Cadieu E."/>
            <person name="Center A."/>
            <person name="Chandra I."/>
            <person name="Cherry J.M."/>
            <person name="Cawley S."/>
            <person name="Dahlke C."/>
            <person name="Davenport L.B."/>
            <person name="Davies P."/>
            <person name="de Pablos B."/>
            <person name="Delcher A."/>
            <person name="Deng Z."/>
            <person name="Mays A.D."/>
            <person name="Dew I."/>
            <person name="Dietz S.M."/>
            <person name="Dodson K."/>
            <person name="Doup L.E."/>
            <person name="Downes M."/>
            <person name="Dugan-Rocha S."/>
            <person name="Dunkov B.C."/>
            <person name="Dunn P."/>
            <person name="Durbin K.J."/>
            <person name="Evangelista C.C."/>
            <person name="Ferraz C."/>
            <person name="Ferriera S."/>
            <person name="Fleischmann W."/>
            <person name="Fosler C."/>
            <person name="Gabrielian A.E."/>
            <person name="Garg N.S."/>
            <person name="Gelbart W.M."/>
            <person name="Glasser K."/>
            <person name="Glodek A."/>
            <person name="Gong F."/>
            <person name="Gorrell J.H."/>
            <person name="Gu Z."/>
            <person name="Guan P."/>
            <person name="Harris M."/>
            <person name="Harris N.L."/>
            <person name="Harvey D.A."/>
            <person name="Heiman T.J."/>
            <person name="Hernandez J.R."/>
            <person name="Houck J."/>
            <person name="Hostin D."/>
            <person name="Houston K.A."/>
            <person name="Howland T.J."/>
            <person name="Wei M.-H."/>
            <person name="Ibegwam C."/>
            <person name="Jalali M."/>
            <person name="Kalush F."/>
            <person name="Karpen G.H."/>
            <person name="Ke Z."/>
            <person name="Kennison J.A."/>
            <person name="Ketchum K.A."/>
            <person name="Kimmel B.E."/>
            <person name="Kodira C.D."/>
            <person name="Kraft C.L."/>
            <person name="Kravitz S."/>
            <person name="Kulp D."/>
            <person name="Lai Z."/>
            <person name="Lasko P."/>
            <person name="Lei Y."/>
            <person name="Levitsky A.A."/>
            <person name="Li J.H."/>
            <person name="Li Z."/>
            <person name="Liang Y."/>
            <person name="Lin X."/>
            <person name="Liu X."/>
            <person name="Mattei B."/>
            <person name="McIntosh T.C."/>
            <person name="McLeod M.P."/>
            <person name="McPherson D."/>
            <person name="Merkulov G."/>
            <person name="Milshina N.V."/>
            <person name="Mobarry C."/>
            <person name="Morris J."/>
            <person name="Moshrefi A."/>
            <person name="Mount S.M."/>
            <person name="Moy M."/>
            <person name="Murphy B."/>
            <person name="Murphy L."/>
            <person name="Muzny D.M."/>
            <person name="Nelson D.L."/>
            <person name="Nelson D.R."/>
            <person name="Nelson K.A."/>
            <person name="Nixon K."/>
            <person name="Nusskern D.R."/>
            <person name="Pacleb J.M."/>
            <person name="Palazzolo M."/>
            <person name="Pittman G.S."/>
            <person name="Pan S."/>
            <person name="Pollard J."/>
            <person name="Puri V."/>
            <person name="Reese M.G."/>
            <person name="Reinert K."/>
            <person name="Remington K."/>
            <person name="Saunders R.D.C."/>
            <person name="Scheeler F."/>
            <person name="Shen H."/>
            <person name="Shue B.C."/>
            <person name="Siden-Kiamos I."/>
            <person name="Simpson M."/>
            <person name="Skupski M.P."/>
            <person name="Smith T.J."/>
            <person name="Spier E."/>
            <person name="Spradling A.C."/>
            <person name="Stapleton M."/>
            <person name="Strong R."/>
            <person name="Sun E."/>
            <person name="Svirskas R."/>
            <person name="Tector C."/>
            <person name="Turner R."/>
            <person name="Venter E."/>
            <person name="Wang A.H."/>
            <person name="Wang X."/>
            <person name="Wang Z.-Y."/>
            <person name="Wassarman D.A."/>
            <person name="Weinstock G.M."/>
            <person name="Weissenbach J."/>
            <person name="Williams S.M."/>
            <person name="Woodage T."/>
            <person name="Worley K.C."/>
            <person name="Wu D."/>
            <person name="Yang S."/>
            <person name="Yao Q.A."/>
            <person name="Ye J."/>
            <person name="Yeh R.-F."/>
            <person name="Zaveri J.S."/>
            <person name="Zhan M."/>
            <person name="Zhang G."/>
            <person name="Zhao Q."/>
            <person name="Zheng L."/>
            <person name="Zheng X.H."/>
            <person name="Zhong F.N."/>
            <person name="Zhong W."/>
            <person name="Zhou X."/>
            <person name="Zhu S.C."/>
            <person name="Zhu X."/>
            <person name="Smith H.O."/>
            <person name="Gibbs R.A."/>
            <person name="Myers E.W."/>
            <person name="Rubin G.M."/>
            <person name="Venter J.C."/>
        </authorList>
    </citation>
    <scope>NUCLEOTIDE SEQUENCE [LARGE SCALE GENOMIC DNA]</scope>
    <source>
        <strain evidence="8">Berkeley</strain>
    </source>
</reference>
<reference evidence="15 16" key="3">
    <citation type="journal article" date="2002" name="Genome Biol.">
        <title>Annotation of the Drosophila melanogaster euchromatic genome: a systematic review.</title>
        <authorList>
            <person name="Misra S."/>
            <person name="Crosby M.A."/>
            <person name="Mungall C.J."/>
            <person name="Matthews B.B."/>
            <person name="Campbell K.S."/>
            <person name="Hradecky P."/>
            <person name="Huang Y."/>
            <person name="Kaminker J.S."/>
            <person name="Millburn G.H."/>
            <person name="Prochnik S.E."/>
            <person name="Smith C.D."/>
            <person name="Tupy J.L."/>
            <person name="Whitfield E.J."/>
            <person name="Bayraktaroglu L."/>
            <person name="Berman B.P."/>
            <person name="Bettencourt B.R."/>
            <person name="Celniker S.E."/>
            <person name="de Grey A.D.N.J."/>
            <person name="Drysdale R.A."/>
            <person name="Harris N.L."/>
            <person name="Richter J."/>
            <person name="Russo S."/>
            <person name="Schroeder A.J."/>
            <person name="Shu S.Q."/>
            <person name="Stapleton M."/>
            <person name="Yamada C."/>
            <person name="Ashburner M."/>
            <person name="Gelbart W.M."/>
            <person name="Rubin G.M."/>
            <person name="Lewis S.E."/>
        </authorList>
    </citation>
    <scope>GENOME REANNOTATION</scope>
    <source>
        <strain>Berkeley</strain>
    </source>
</reference>
<reference evidence="17" key="4">
    <citation type="submission" date="2004-01" db="EMBL/GenBank/DDBJ databases">
        <authorList>
            <person name="Stapleton M."/>
            <person name="Brokstein P."/>
            <person name="Hong L."/>
            <person name="Agbayani A."/>
            <person name="Carlson J.W."/>
            <person name="Champe M."/>
            <person name="Chavez C."/>
            <person name="Dorsett V."/>
            <person name="Dresnek D."/>
            <person name="Farfan D."/>
            <person name="Frise E."/>
            <person name="George R.A."/>
            <person name="Gonzalez M."/>
            <person name="Guarin H."/>
            <person name="Kronmiller B."/>
            <person name="Li P.W."/>
            <person name="Liao G."/>
            <person name="Miranda A."/>
            <person name="Mungall C.J."/>
            <person name="Nunoo J."/>
            <person name="Pacleb J.M."/>
            <person name="Paragas V."/>
            <person name="Park S."/>
            <person name="Patel S."/>
            <person name="Phouanenavong S."/>
            <person name="Wan K.H."/>
            <person name="Yu C."/>
            <person name="Lewis S.E."/>
            <person name="Rubin G.M."/>
            <person name="Celniker S.E."/>
        </authorList>
    </citation>
    <scope>NUCLEOTIDE SEQUENCE [LARGE SCALE MRNA]</scope>
    <source>
        <strain>Berkeley</strain>
        <tissue>Embryo</tissue>
    </source>
</reference>
<reference evidence="15" key="5">
    <citation type="journal article" date="2005" name="Curr. Biol.">
        <title>Myosin VIIA defects, which underlie the Usher 1B syndrome in humans, lead to deafness in Drosophila.</title>
        <authorList>
            <person name="Todi S.V."/>
            <person name="Franke J.D."/>
            <person name="Kiehart D.P."/>
            <person name="Eberl D.F."/>
        </authorList>
    </citation>
    <scope>FUNCTION</scope>
    <scope>SUBCELLULAR LOCATION</scope>
</reference>
<reference evidence="15" key="6">
    <citation type="journal article" date="2006" name="Proc. Natl. Acad. Sci. U.S.A.">
        <title>Dimerized Drosophila myosin VIIa: a processive motor.</title>
        <authorList>
            <person name="Yang Y."/>
            <person name="Kovacs M."/>
            <person name="Sakamoto T."/>
            <person name="Zhang F."/>
            <person name="Kiehart D.P."/>
            <person name="Sellers J.R."/>
        </authorList>
    </citation>
    <scope>FUNCTION</scope>
    <scope>SUBUNIT</scope>
</reference>
<reference key="7">
    <citation type="journal article" date="2008" name="J. Proteome Res.">
        <title>Phosphoproteome analysis of Drosophila melanogaster embryos.</title>
        <authorList>
            <person name="Zhai B."/>
            <person name="Villen J."/>
            <person name="Beausoleil S.A."/>
            <person name="Mintseris J."/>
            <person name="Gygi S.P."/>
        </authorList>
    </citation>
    <scope>PHOSPHORYLATION [LARGE SCALE ANALYSIS] AT SER-1651; SER-1654 AND THR-2045</scope>
    <scope>IDENTIFICATION BY MASS SPECTROMETRY</scope>
    <source>
        <tissue>Embryo</tissue>
    </source>
</reference>
<reference key="8">
    <citation type="journal article" date="2014" name="J. Cell Sci.">
        <title>Myosin VIIA regulates microvillus morphogenesis and interacts with cadherin Cad99C in Drosophila oogenesis.</title>
        <authorList>
            <person name="Glowinski C."/>
            <person name="Liu R.H."/>
            <person name="Chen X."/>
            <person name="Darabie A."/>
            <person name="Godt D."/>
        </authorList>
    </citation>
    <scope>FUNCTION</scope>
    <scope>INTERACTION WITH CAD99C</scope>
    <scope>SUBCELLULAR LOCATION</scope>
    <scope>DEVELOPMENTAL STAGE</scope>
</reference>
<reference key="9">
    <citation type="journal article" date="2016" name="Elife">
        <title>The E3 ligase Ubr3 regulates Usher syndrome and MYH9 disorder proteins in the auditory organs of Drosophila and mammals.</title>
        <authorList>
            <person name="Li T."/>
            <person name="Giagtzoglou N."/>
            <person name="Eberl D.F."/>
            <person name="Jaiswal S.N."/>
            <person name="Cai T."/>
            <person name="Godt D."/>
            <person name="Groves A.K."/>
            <person name="Bellen H.J."/>
        </authorList>
    </citation>
    <scope>FUNCTION</scope>
    <scope>INTERACTION WITH CAD99C; SANS AND ZIP</scope>
    <scope>DISRUPTION PHENOTYPE</scope>
</reference>
<dbReference type="EMBL" id="AE014134">
    <property type="protein sequence ID" value="AAF53435.1"/>
    <property type="molecule type" value="Genomic_DNA"/>
</dbReference>
<dbReference type="EMBL" id="AE014134">
    <property type="protein sequence ID" value="AAN10886.1"/>
    <property type="molecule type" value="Genomic_DNA"/>
</dbReference>
<dbReference type="EMBL" id="AY069438">
    <property type="protein sequence ID" value="AAL39583.2"/>
    <property type="molecule type" value="mRNA"/>
</dbReference>
<dbReference type="EMBL" id="BT011332">
    <property type="protein sequence ID" value="AAR96124.1"/>
    <property type="molecule type" value="mRNA"/>
</dbReference>
<dbReference type="RefSeq" id="NP_001285949.1">
    <property type="nucleotide sequence ID" value="NM_001299020.1"/>
</dbReference>
<dbReference type="RefSeq" id="NP_001285950.1">
    <property type="nucleotide sequence ID" value="NM_001299021.1"/>
</dbReference>
<dbReference type="RefSeq" id="NP_523571.1">
    <property type="nucleotide sequence ID" value="NM_078847.4"/>
</dbReference>
<dbReference type="RefSeq" id="NP_723895.1">
    <property type="nucleotide sequence ID" value="NM_165099.3"/>
</dbReference>
<dbReference type="SMR" id="Q9V3Z6"/>
<dbReference type="BioGRID" id="60900">
    <property type="interactions" value="16"/>
</dbReference>
<dbReference type="DIP" id="DIP-48747N"/>
<dbReference type="FunCoup" id="Q9V3Z6">
    <property type="interactions" value="235"/>
</dbReference>
<dbReference type="IntAct" id="Q9V3Z6">
    <property type="interactions" value="5"/>
</dbReference>
<dbReference type="STRING" id="7227.FBpp0310275"/>
<dbReference type="iPTMnet" id="Q9V3Z6"/>
<dbReference type="PaxDb" id="7227-FBpp0080282"/>
<dbReference type="EnsemblMetazoa" id="FBtr0080723">
    <property type="protein sequence ID" value="FBpp0080282"/>
    <property type="gene ID" value="FBgn0000317"/>
</dbReference>
<dbReference type="EnsemblMetazoa" id="FBtr0080724">
    <property type="protein sequence ID" value="FBpp0080283"/>
    <property type="gene ID" value="FBgn0000317"/>
</dbReference>
<dbReference type="EnsemblMetazoa" id="FBtr0343686">
    <property type="protein sequence ID" value="FBpp0310274"/>
    <property type="gene ID" value="FBgn0000317"/>
</dbReference>
<dbReference type="EnsemblMetazoa" id="FBtr0343687">
    <property type="protein sequence ID" value="FBpp0310275"/>
    <property type="gene ID" value="FBgn0000317"/>
</dbReference>
<dbReference type="GeneID" id="34882"/>
<dbReference type="KEGG" id="dme:Dmel_CG7595"/>
<dbReference type="AGR" id="FB:FBgn0000317"/>
<dbReference type="CTD" id="34882"/>
<dbReference type="FlyBase" id="FBgn0000317">
    <property type="gene designation" value="ck"/>
</dbReference>
<dbReference type="VEuPathDB" id="VectorBase:FBgn0000317"/>
<dbReference type="eggNOG" id="KOG4229">
    <property type="taxonomic scope" value="Eukaryota"/>
</dbReference>
<dbReference type="GeneTree" id="ENSGT00940000155350"/>
<dbReference type="HOGENOM" id="CLU_000192_14_1_1"/>
<dbReference type="InParanoid" id="Q9V3Z6"/>
<dbReference type="OMA" id="TGFQGRC"/>
<dbReference type="OrthoDB" id="6108017at2759"/>
<dbReference type="PhylomeDB" id="Q9V3Z6"/>
<dbReference type="Reactome" id="R-DME-2453902">
    <property type="pathway name" value="The canonical retinoid cycle in rods (twilight vision)"/>
</dbReference>
<dbReference type="SignaLink" id="Q9V3Z6"/>
<dbReference type="BioGRID-ORCS" id="34882">
    <property type="hits" value="0 hits in 3 CRISPR screens"/>
</dbReference>
<dbReference type="GenomeRNAi" id="34882"/>
<dbReference type="PRO" id="PR:Q9V3Z6"/>
<dbReference type="Proteomes" id="UP000000803">
    <property type="component" value="Chromosome 2L"/>
</dbReference>
<dbReference type="Bgee" id="FBgn0000317">
    <property type="expression patterns" value="Expressed in dorsal appendage forming follicle cell in ovary and 140 other cell types or tissues"/>
</dbReference>
<dbReference type="ExpressionAtlas" id="Q9V3Z6">
    <property type="expression patterns" value="baseline and differential"/>
</dbReference>
<dbReference type="GO" id="GO:0045179">
    <property type="term" value="C:apical cortex"/>
    <property type="evidence" value="ECO:0000314"/>
    <property type="project" value="FlyBase"/>
</dbReference>
<dbReference type="GO" id="GO:0045180">
    <property type="term" value="C:basal cortex"/>
    <property type="evidence" value="ECO:0000314"/>
    <property type="project" value="FlyBase"/>
</dbReference>
<dbReference type="GO" id="GO:0005938">
    <property type="term" value="C:cell cortex"/>
    <property type="evidence" value="ECO:0000314"/>
    <property type="project" value="FlyBase"/>
</dbReference>
<dbReference type="GO" id="GO:0070825">
    <property type="term" value="C:chrorion micropyle"/>
    <property type="evidence" value="ECO:0000314"/>
    <property type="project" value="FlyBase"/>
</dbReference>
<dbReference type="GO" id="GO:0005737">
    <property type="term" value="C:cytoplasm"/>
    <property type="evidence" value="ECO:0000314"/>
    <property type="project" value="UniProtKB"/>
</dbReference>
<dbReference type="GO" id="GO:0005829">
    <property type="term" value="C:cytosol"/>
    <property type="evidence" value="ECO:0000314"/>
    <property type="project" value="FlyBase"/>
</dbReference>
<dbReference type="GO" id="GO:0035182">
    <property type="term" value="C:female germline ring canal outer rim"/>
    <property type="evidence" value="ECO:0000314"/>
    <property type="project" value="FlyBase"/>
</dbReference>
<dbReference type="GO" id="GO:0016020">
    <property type="term" value="C:membrane"/>
    <property type="evidence" value="ECO:0000318"/>
    <property type="project" value="GO_Central"/>
</dbReference>
<dbReference type="GO" id="GO:0005902">
    <property type="term" value="C:microvillus"/>
    <property type="evidence" value="ECO:0000314"/>
    <property type="project" value="FlyBase"/>
</dbReference>
<dbReference type="GO" id="GO:0031477">
    <property type="term" value="C:myosin VII complex"/>
    <property type="evidence" value="ECO:0000353"/>
    <property type="project" value="FlyBase"/>
</dbReference>
<dbReference type="GO" id="GO:0051015">
    <property type="term" value="F:actin filament binding"/>
    <property type="evidence" value="ECO:0000318"/>
    <property type="project" value="GO_Central"/>
</dbReference>
<dbReference type="GO" id="GO:0005524">
    <property type="term" value="F:ATP binding"/>
    <property type="evidence" value="ECO:0000314"/>
    <property type="project" value="FlyBase"/>
</dbReference>
<dbReference type="GO" id="GO:0045296">
    <property type="term" value="F:cadherin binding"/>
    <property type="evidence" value="ECO:0000353"/>
    <property type="project" value="FlyBase"/>
</dbReference>
<dbReference type="GO" id="GO:0000146">
    <property type="term" value="F:microfilament motor activity"/>
    <property type="evidence" value="ECO:0000314"/>
    <property type="project" value="FlyBase"/>
</dbReference>
<dbReference type="GO" id="GO:0032027">
    <property type="term" value="F:myosin light chain binding"/>
    <property type="evidence" value="ECO:0000353"/>
    <property type="project" value="FlyBase"/>
</dbReference>
<dbReference type="GO" id="GO:0060002">
    <property type="term" value="F:plus-end directed microfilament motor activity"/>
    <property type="evidence" value="ECO:0000314"/>
    <property type="project" value="FlyBase"/>
</dbReference>
<dbReference type="GO" id="GO:0007015">
    <property type="term" value="P:actin filament organization"/>
    <property type="evidence" value="ECO:0000315"/>
    <property type="project" value="FlyBase"/>
</dbReference>
<dbReference type="GO" id="GO:0030048">
    <property type="term" value="P:actin filament-based movement"/>
    <property type="evidence" value="ECO:0000314"/>
    <property type="project" value="FlyBase"/>
</dbReference>
<dbReference type="GO" id="GO:0007469">
    <property type="term" value="P:antennal development"/>
    <property type="evidence" value="ECO:0000315"/>
    <property type="project" value="FlyBase"/>
</dbReference>
<dbReference type="GO" id="GO:0048800">
    <property type="term" value="P:antennal morphogenesis"/>
    <property type="evidence" value="ECO:0000315"/>
    <property type="project" value="FlyBase"/>
</dbReference>
<dbReference type="GO" id="GO:0008407">
    <property type="term" value="P:chaeta morphogenesis"/>
    <property type="evidence" value="ECO:0000315"/>
    <property type="project" value="FlyBase"/>
</dbReference>
<dbReference type="GO" id="GO:0035293">
    <property type="term" value="P:chitin-based larval cuticle pattern formation"/>
    <property type="evidence" value="ECO:0000316"/>
    <property type="project" value="FlyBase"/>
</dbReference>
<dbReference type="GO" id="GO:0046847">
    <property type="term" value="P:filopodium assembly"/>
    <property type="evidence" value="ECO:0000316"/>
    <property type="project" value="FlyBase"/>
</dbReference>
<dbReference type="GO" id="GO:0032529">
    <property type="term" value="P:follicle cell microvillus organization"/>
    <property type="evidence" value="ECO:0000315"/>
    <property type="project" value="FlyBase"/>
</dbReference>
<dbReference type="GO" id="GO:0035317">
    <property type="term" value="P:imaginal disc-derived wing hair organization"/>
    <property type="evidence" value="ECO:0000316"/>
    <property type="project" value="FlyBase"/>
</dbReference>
<dbReference type="GO" id="GO:0008586">
    <property type="term" value="P:imaginal disc-derived wing vein morphogenesis"/>
    <property type="evidence" value="ECO:0000316"/>
    <property type="project" value="FlyBase"/>
</dbReference>
<dbReference type="GO" id="GO:0007423">
    <property type="term" value="P:sensory organ development"/>
    <property type="evidence" value="ECO:0000315"/>
    <property type="project" value="FlyBase"/>
</dbReference>
<dbReference type="GO" id="GO:0007605">
    <property type="term" value="P:sensory perception of sound"/>
    <property type="evidence" value="ECO:0000315"/>
    <property type="project" value="FlyBase"/>
</dbReference>
<dbReference type="CDD" id="cd17092">
    <property type="entry name" value="FERM1_F1_Myosin-VII"/>
    <property type="match status" value="1"/>
</dbReference>
<dbReference type="CDD" id="cd17093">
    <property type="entry name" value="FERM2_F1_Myosin-VII"/>
    <property type="match status" value="1"/>
</dbReference>
<dbReference type="CDD" id="cd14473">
    <property type="entry name" value="FERM_B-lobe"/>
    <property type="match status" value="2"/>
</dbReference>
<dbReference type="CDD" id="cd13198">
    <property type="entry name" value="FERM_C1_MyoVII"/>
    <property type="match status" value="1"/>
</dbReference>
<dbReference type="CDD" id="cd13199">
    <property type="entry name" value="FERM_C2_MyoVII"/>
    <property type="match status" value="1"/>
</dbReference>
<dbReference type="CDD" id="cd01381">
    <property type="entry name" value="MYSc_Myo7"/>
    <property type="match status" value="1"/>
</dbReference>
<dbReference type="FunFam" id="1.10.10.820:FF:000001">
    <property type="entry name" value="Myosin heavy chain"/>
    <property type="match status" value="1"/>
</dbReference>
<dbReference type="FunFam" id="1.20.80.10:FF:000012">
    <property type="entry name" value="Myosin VIIA"/>
    <property type="match status" value="1"/>
</dbReference>
<dbReference type="FunFam" id="1.20.5.190:FF:000047">
    <property type="entry name" value="Myosin-VIIa"/>
    <property type="match status" value="1"/>
</dbReference>
<dbReference type="FunFam" id="1.20.120.720:FF:000019">
    <property type="entry name" value="myosin-VIIa isoform X2"/>
    <property type="match status" value="1"/>
</dbReference>
<dbReference type="FunFam" id="1.20.80.10:FF:000013">
    <property type="entry name" value="Unconventional myosin-VIIa"/>
    <property type="match status" value="1"/>
</dbReference>
<dbReference type="FunFam" id="3.10.20.90:FF:000036">
    <property type="entry name" value="Unconventional myosin-VIIa"/>
    <property type="match status" value="1"/>
</dbReference>
<dbReference type="FunFam" id="3.10.20.90:FF:000051">
    <property type="entry name" value="Unconventional myosin-VIIa"/>
    <property type="match status" value="1"/>
</dbReference>
<dbReference type="FunFam" id="2.30.29.30:FF:000075">
    <property type="entry name" value="unconventional myosin-VIIa"/>
    <property type="match status" value="1"/>
</dbReference>
<dbReference type="FunFam" id="2.30.29.30:FF:000079">
    <property type="entry name" value="unconventional myosin-VIIa"/>
    <property type="match status" value="1"/>
</dbReference>
<dbReference type="Gene3D" id="1.10.10.820">
    <property type="match status" value="1"/>
</dbReference>
<dbReference type="Gene3D" id="1.20.5.190">
    <property type="match status" value="2"/>
</dbReference>
<dbReference type="Gene3D" id="1.20.58.530">
    <property type="match status" value="1"/>
</dbReference>
<dbReference type="Gene3D" id="1.20.80.10">
    <property type="match status" value="2"/>
</dbReference>
<dbReference type="Gene3D" id="6.20.240.20">
    <property type="match status" value="1"/>
</dbReference>
<dbReference type="Gene3D" id="3.40.850.10">
    <property type="entry name" value="Kinesin motor domain"/>
    <property type="match status" value="1"/>
</dbReference>
<dbReference type="Gene3D" id="1.20.120.720">
    <property type="entry name" value="Myosin VI head, motor domain, U50 subdomain"/>
    <property type="match status" value="1"/>
</dbReference>
<dbReference type="Gene3D" id="1.25.40.530">
    <property type="entry name" value="MyTH4 domain"/>
    <property type="match status" value="2"/>
</dbReference>
<dbReference type="Gene3D" id="3.10.20.90">
    <property type="entry name" value="Phosphatidylinositol 3-kinase Catalytic Subunit, Chain A, domain 1"/>
    <property type="match status" value="2"/>
</dbReference>
<dbReference type="Gene3D" id="2.30.29.30">
    <property type="entry name" value="Pleckstrin-homology domain (PH domain)/Phosphotyrosine-binding domain (PTB)"/>
    <property type="match status" value="2"/>
</dbReference>
<dbReference type="Gene3D" id="2.30.30.40">
    <property type="entry name" value="SH3 Domains"/>
    <property type="match status" value="1"/>
</dbReference>
<dbReference type="InterPro" id="IPR019749">
    <property type="entry name" value="Band_41_domain"/>
</dbReference>
<dbReference type="InterPro" id="IPR014352">
    <property type="entry name" value="FERM/acyl-CoA-bd_prot_sf"/>
</dbReference>
<dbReference type="InterPro" id="IPR035963">
    <property type="entry name" value="FERM_2"/>
</dbReference>
<dbReference type="InterPro" id="IPR019748">
    <property type="entry name" value="FERM_central"/>
</dbReference>
<dbReference type="InterPro" id="IPR000299">
    <property type="entry name" value="FERM_domain"/>
</dbReference>
<dbReference type="InterPro" id="IPR000048">
    <property type="entry name" value="IQ_motif_EF-hand-BS"/>
</dbReference>
<dbReference type="InterPro" id="IPR002404">
    <property type="entry name" value="IRS_PTB"/>
</dbReference>
<dbReference type="InterPro" id="IPR036961">
    <property type="entry name" value="Kinesin_motor_dom_sf"/>
</dbReference>
<dbReference type="InterPro" id="IPR001609">
    <property type="entry name" value="Myosin_head_motor_dom-like"/>
</dbReference>
<dbReference type="InterPro" id="IPR041793">
    <property type="entry name" value="MyoVII_FERM_C1"/>
</dbReference>
<dbReference type="InterPro" id="IPR041794">
    <property type="entry name" value="MyoVII_FERM_C2"/>
</dbReference>
<dbReference type="InterPro" id="IPR036106">
    <property type="entry name" value="MYSc_Myo7"/>
</dbReference>
<dbReference type="InterPro" id="IPR000857">
    <property type="entry name" value="MyTH4_dom"/>
</dbReference>
<dbReference type="InterPro" id="IPR038185">
    <property type="entry name" value="MyTH4_dom_sf"/>
</dbReference>
<dbReference type="InterPro" id="IPR027417">
    <property type="entry name" value="P-loop_NTPase"/>
</dbReference>
<dbReference type="InterPro" id="IPR011993">
    <property type="entry name" value="PH-like_dom_sf"/>
</dbReference>
<dbReference type="InterPro" id="IPR036028">
    <property type="entry name" value="SH3-like_dom_sf"/>
</dbReference>
<dbReference type="InterPro" id="IPR001452">
    <property type="entry name" value="SH3_domain"/>
</dbReference>
<dbReference type="InterPro" id="IPR029071">
    <property type="entry name" value="Ubiquitin-like_domsf"/>
</dbReference>
<dbReference type="InterPro" id="IPR051567">
    <property type="entry name" value="Unconventional_Myosin_ATPase"/>
</dbReference>
<dbReference type="PANTHER" id="PTHR22692:SF33">
    <property type="entry name" value="MYOSIN"/>
    <property type="match status" value="1"/>
</dbReference>
<dbReference type="PANTHER" id="PTHR22692">
    <property type="entry name" value="MYOSIN VII, XV"/>
    <property type="match status" value="1"/>
</dbReference>
<dbReference type="Pfam" id="PF21998">
    <property type="entry name" value="FERM_C1_MyoVII"/>
    <property type="match status" value="1"/>
</dbReference>
<dbReference type="Pfam" id="PF00373">
    <property type="entry name" value="FERM_M"/>
    <property type="match status" value="1"/>
</dbReference>
<dbReference type="Pfam" id="PF00612">
    <property type="entry name" value="IQ"/>
    <property type="match status" value="4"/>
</dbReference>
<dbReference type="Pfam" id="PF02174">
    <property type="entry name" value="IRS"/>
    <property type="match status" value="1"/>
</dbReference>
<dbReference type="Pfam" id="PF00063">
    <property type="entry name" value="Myosin_head"/>
    <property type="match status" value="1"/>
</dbReference>
<dbReference type="Pfam" id="PF24123">
    <property type="entry name" value="Myosin_VII_N"/>
    <property type="match status" value="1"/>
</dbReference>
<dbReference type="Pfam" id="PF00784">
    <property type="entry name" value="MyTH4"/>
    <property type="match status" value="2"/>
</dbReference>
<dbReference type="Pfam" id="PF21989">
    <property type="entry name" value="RA_2"/>
    <property type="match status" value="2"/>
</dbReference>
<dbReference type="PRINTS" id="PR00193">
    <property type="entry name" value="MYOSINHEAVY"/>
</dbReference>
<dbReference type="SMART" id="SM00295">
    <property type="entry name" value="B41"/>
    <property type="match status" value="2"/>
</dbReference>
<dbReference type="SMART" id="SM00015">
    <property type="entry name" value="IQ"/>
    <property type="match status" value="4"/>
</dbReference>
<dbReference type="SMART" id="SM00242">
    <property type="entry name" value="MYSc"/>
    <property type="match status" value="1"/>
</dbReference>
<dbReference type="SMART" id="SM00139">
    <property type="entry name" value="MyTH4"/>
    <property type="match status" value="2"/>
</dbReference>
<dbReference type="SMART" id="SM00326">
    <property type="entry name" value="SH3"/>
    <property type="match status" value="1"/>
</dbReference>
<dbReference type="SUPFAM" id="SSF52540">
    <property type="entry name" value="P-loop containing nucleoside triphosphate hydrolases"/>
    <property type="match status" value="2"/>
</dbReference>
<dbReference type="SUPFAM" id="SSF50729">
    <property type="entry name" value="PH domain-like"/>
    <property type="match status" value="1"/>
</dbReference>
<dbReference type="SUPFAM" id="SSF47031">
    <property type="entry name" value="Second domain of FERM"/>
    <property type="match status" value="2"/>
</dbReference>
<dbReference type="SUPFAM" id="SSF50044">
    <property type="entry name" value="SH3-domain"/>
    <property type="match status" value="1"/>
</dbReference>
<dbReference type="SUPFAM" id="SSF54236">
    <property type="entry name" value="Ubiquitin-like"/>
    <property type="match status" value="2"/>
</dbReference>
<dbReference type="PROSITE" id="PS50057">
    <property type="entry name" value="FERM_3"/>
    <property type="match status" value="2"/>
</dbReference>
<dbReference type="PROSITE" id="PS50096">
    <property type="entry name" value="IQ"/>
    <property type="match status" value="4"/>
</dbReference>
<dbReference type="PROSITE" id="PS51456">
    <property type="entry name" value="MYOSIN_MOTOR"/>
    <property type="match status" value="1"/>
</dbReference>
<dbReference type="PROSITE" id="PS51016">
    <property type="entry name" value="MYTH4"/>
    <property type="match status" value="2"/>
</dbReference>
<dbReference type="PROSITE" id="PS50002">
    <property type="entry name" value="SH3"/>
    <property type="match status" value="1"/>
</dbReference>
<feature type="chain" id="PRO_0000306376" description="Myosin-VIIa">
    <location>
        <begin position="1"/>
        <end position="2167"/>
    </location>
</feature>
<feature type="domain" description="Myosin motor" evidence="7">
    <location>
        <begin position="63"/>
        <end position="733"/>
    </location>
</feature>
<feature type="domain" description="IQ 1" evidence="4 15">
    <location>
        <begin position="736"/>
        <end position="758"/>
    </location>
</feature>
<feature type="domain" description="IQ 2" evidence="4">
    <location>
        <begin position="759"/>
        <end position="788"/>
    </location>
</feature>
<feature type="domain" description="IQ 3" evidence="4 15">
    <location>
        <begin position="805"/>
        <end position="827"/>
    </location>
</feature>
<feature type="domain" description="IQ 4" evidence="4">
    <location>
        <begin position="828"/>
        <end position="857"/>
    </location>
</feature>
<feature type="domain" description="MyTH4 1" evidence="6">
    <location>
        <begin position="1008"/>
        <end position="1245"/>
    </location>
</feature>
<feature type="domain" description="FERM 1" evidence="3">
    <location>
        <begin position="1250"/>
        <end position="1560"/>
    </location>
</feature>
<feature type="domain" description="SH3" evidence="5">
    <location>
        <begin position="1558"/>
        <end position="1627"/>
    </location>
</feature>
<feature type="domain" description="MyTH4 2" evidence="6">
    <location>
        <begin position="1701"/>
        <end position="1849"/>
    </location>
</feature>
<feature type="domain" description="FERM 2" evidence="3">
    <location>
        <begin position="1855"/>
        <end position="2158"/>
    </location>
</feature>
<feature type="region of interest" description="Actin-binding" evidence="1">
    <location>
        <begin position="612"/>
        <end position="634"/>
    </location>
</feature>
<feature type="region of interest" description="Actin-binding" evidence="1">
    <location>
        <begin position="712"/>
        <end position="726"/>
    </location>
</feature>
<feature type="coiled-coil region" evidence="2">
    <location>
        <begin position="886"/>
        <end position="919"/>
    </location>
</feature>
<feature type="binding site" evidence="1">
    <location>
        <begin position="156"/>
        <end position="163"/>
    </location>
    <ligand>
        <name>ATP</name>
        <dbReference type="ChEBI" id="CHEBI:30616"/>
    </ligand>
</feature>
<feature type="modified residue" description="Phosphoserine" evidence="12">
    <location>
        <position position="1651"/>
    </location>
</feature>
<feature type="modified residue" description="Phosphoserine" evidence="12">
    <location>
        <position position="1654"/>
    </location>
</feature>
<feature type="modified residue" description="Phosphothreonine" evidence="12">
    <location>
        <position position="2045"/>
    </location>
</feature>
<feature type="sequence conflict" description="In Ref. 4; AAR96124." evidence="15" ref="4">
    <original>I</original>
    <variation>M</variation>
    <location>
        <position position="2024"/>
    </location>
</feature>
<gene>
    <name evidence="16" type="primary">ck</name>
    <name type="ORF">CG7595</name>
</gene>
<accession>Q9V3Z6</accession>
<accession>Q6NNF6</accession>
<accession>Q8T0A9</accession>
<sequence length="2167" mass="250309">MVIVTRGDYIWIEPASGREFDVAIGARVVSAEGRRIQVRDDDGDEVWLAPERRIKAMHASSVQGVEDMISLGDLHEAGILRNLLIRYKENLIYTYTGSILVAVNPYQILPIYTGDQIKLYKERKIGELPPHIFAIGDNAYAHMKRYRQDQCIVISGESGAGKTESTKLILQYLAAISGKHSWIEQQILEANPILEAFGNAKTIRNDNSSRFGKYIDIHFSANGVIEGAKIEQYLLEKSRIVSQNHSERNYHVFYCILAGLSADEKSRLDLGMAADYKYLTGGNSITCEGRDDAAEFSDIRSAMKVLLFSDQEIWEIIKLLAALLHCGNIKYKATVVDNLDATEIPEHINVERVAGLLGLPIQPLIDALTRRTLFAHGETVVSTLSRDQSVDVRDAFVKGIYGRMFVHIVRKINTAIFKPRGTSRNAIGVLDIFGFENFDQNSFEQFCINYANENLQQFFVQHIFKLEQEEYNHEAINWQHIEFVDNQDALDLIAIKQLNIMALIDEEARFPKGTDQTMLAKLHKTHGSHKNYLKPKSDINTSFGLNHFAGVVFYDTRGFLDKNRDTFSPDLLHLVSQSTNKFLRQIFAQDIEMGAETRKRTPTLSTQFRKSLDALMKTLSSCQPFFIRCIKPNELKKPMMFDRGLCCRQLRYSGMMETIRIRRAGYPIRHGFREFVERYRFLIPGVPPAHRTDCQAATSRICAVVLGKSDYQLGHTKVFLKDAHDLFLEQERDRVLTRKILILQRSIRGWVYRRRFLRLRAAAITVQRFWKGYAQRKRYRNMRVGYMRLQALIRSRVLSHRFRHLRGHIVGLQAHARGYLVRREYGHKMWAVIKIQSHVRRMIAMRRYRKLRLEHKQFAEVLQLRKLEEQELLHRGNKHAREIAEQHYRDRLHELERREIQEQLENRRRVEVNMNIINDAARKQEEPVDDGKLVEAMFDFLPDSSSDAPTPHGGRETSVFNDLPHAQNVNQDDIIAPIHISEDEEDLSEFKFQKFAATYFQGNVNHQYAKKALKHPLLPLHTQGDQLAAQALWITILRFTGDMPEPKYHTMDRMDTTSVMSKVTATLGRNFIRSKEFQEAQLMGLDPDAFLKQKPRSIRHKLVSLTLKRKNKLGEDVRRRLQDDEYTADSYQSWLQSRPTSNLEKLHFIIGHGILRAELRDEIYCQICKQLTNNPLKSSHARGWILLSLCVGCFAPSEKFVNYLRAFIREGPPGYAPYCEERLKRTFNNGTRNQPPSWLELQATKSKKPIMLPITFMDGNTKTLLADSATTARELCNQLSDKISLKDQFGFSLYIALFDKVSSLGSGGDHVMDAISQCEQYAKEQGAQERNAPWRLFFRKEIFAPWHEPTHDQVATNLIYQQVVRGVKFGEYRCDKEEDLAMIAAQQYFIEYSTDMSMERLFTLLPNFIPDFCLSGVDKAIERWAALVLQAYKKSYYVKDKIAPLKIKEDIVSYAKYKWPLLFSRFYEAYRNSGPNLPKNDVIIAVNWTGVYVVDDQEQVLLELSFPEITAVSSQKTNKVFTQTFSLSTVRGEEFTFQSPNAEDIRDLVVYFLDGLKKRSKYVIALQDYRAPSDGTSFLSFFKGDLIILEDESCGESVLNNGWCIGRCDRSQERGDFPAETVYVLPTLSKPPQDILALFNIEEAHHGRRLSMASNGGAVEPRDRPHTLMEYALDHFRLPPKRTMSKTLTLSSKRSEELWRYSRDPIKAPLLRKLQSKEEFAEEACFAFAAILKYMGDLPSKRPRMGNEITDHIFDGPLKHEILRDEIYCQLMKQLTDNRNRMSEERGWELMWLATGLFACSQGLLKELLLFLRTRRHPISQDSMHRLQKTIRHGQRKYPPHQVEVEAIQHKTTQIFHKVYFPDDTDEAFEVDSSTRAKDFCNNISQRLSLRTSEGFSLFVKIADKVISVPEGDFFFDFVRHLTDWIKKARPIRDGANPQFTYQVFFMKKLWTNTVPGKDRNADLIFHYHQELPKLLRGYHKCSREEAAKLAALVFRVRFGENKQELQAIPQMLRELIPSDIMKIQSTSEWKRSIVASYNQDGGMTSEDAKVAFLKIVYRWPTFGSAFFEVKQTTEPNYPEMLLIAINKHGVSLIHPVTKDILVTHPFTRISNWSSGNTYFHMTIGNLVRGSKLLCETSLGYKMDDLLTSYISLMLTNMNKNRTIRAN</sequence>
<evidence type="ECO:0000250" key="1">
    <source>
        <dbReference type="UniProtKB" id="P08799"/>
    </source>
</evidence>
<evidence type="ECO:0000255" key="2"/>
<evidence type="ECO:0000255" key="3">
    <source>
        <dbReference type="PROSITE-ProRule" id="PRU00084"/>
    </source>
</evidence>
<evidence type="ECO:0000255" key="4">
    <source>
        <dbReference type="PROSITE-ProRule" id="PRU00116"/>
    </source>
</evidence>
<evidence type="ECO:0000255" key="5">
    <source>
        <dbReference type="PROSITE-ProRule" id="PRU00192"/>
    </source>
</evidence>
<evidence type="ECO:0000255" key="6">
    <source>
        <dbReference type="PROSITE-ProRule" id="PRU00359"/>
    </source>
</evidence>
<evidence type="ECO:0000255" key="7">
    <source>
        <dbReference type="PROSITE-ProRule" id="PRU00782"/>
    </source>
</evidence>
<evidence type="ECO:0000269" key="8">
    <source>
    </source>
</evidence>
<evidence type="ECO:0000269" key="9">
    <source>
    </source>
</evidence>
<evidence type="ECO:0000269" key="10">
    <source>
    </source>
</evidence>
<evidence type="ECO:0000269" key="11">
    <source>
    </source>
</evidence>
<evidence type="ECO:0000269" key="12">
    <source>
    </source>
</evidence>
<evidence type="ECO:0000269" key="13">
    <source>
    </source>
</evidence>
<evidence type="ECO:0000269" key="14">
    <source>
    </source>
</evidence>
<evidence type="ECO:0000305" key="15"/>
<evidence type="ECO:0000312" key="16">
    <source>
        <dbReference type="EMBL" id="AAF53435.1"/>
    </source>
</evidence>
<evidence type="ECO:0000312" key="17">
    <source>
        <dbReference type="EMBL" id="AAR96124.1"/>
    </source>
</evidence>
<organism>
    <name type="scientific">Drosophila melanogaster</name>
    <name type="common">Fruit fly</name>
    <dbReference type="NCBI Taxonomy" id="7227"/>
    <lineage>
        <taxon>Eukaryota</taxon>
        <taxon>Metazoa</taxon>
        <taxon>Ecdysozoa</taxon>
        <taxon>Arthropoda</taxon>
        <taxon>Hexapoda</taxon>
        <taxon>Insecta</taxon>
        <taxon>Pterygota</taxon>
        <taxon>Neoptera</taxon>
        <taxon>Endopterygota</taxon>
        <taxon>Diptera</taxon>
        <taxon>Brachycera</taxon>
        <taxon>Muscomorpha</taxon>
        <taxon>Ephydroidea</taxon>
        <taxon>Drosophilidae</taxon>
        <taxon>Drosophila</taxon>
        <taxon>Sophophora</taxon>
    </lineage>
</organism>
<name>MYO7A_DROME</name>
<comment type="function">
    <text evidence="9 10 11 13 14">Myosins are actin-based motor molecules with ATPase activity (PubMed:16585515). Unconventional myosins serve in intracellular movements: can function in cells as a single-molecule cargo transporter (PubMed:16585515). A very slow and high-duty-ratio motor, may be suitable for tension maintenance of actin filaments (PubMed:16585515). Their highly divergent tails are presumed to bind to membranous compartments, which would be moved relative to actin filaments (PubMed:15579689). Plays a key role in the formation of cellular projections and other actin-based functions required for embryonic and larval viability (PubMed:15579689, PubMed:16585515). Necessary for auditory transduction: plays a role in Johnston's organ organization by functioning in scolopidial apical attachment and therefore to acoustic stimulus propagation from the antenna a2/a3 joint to transducing elements (PubMed:15886106, PubMed:27331610). Interaction with the myosin zip may be important for its function in scolopidial apical attachment (PubMed:27331610). During oogenesis it has Cad99c-dependent and Cad99c-independent roles in regulating the shape and spacing of the follicle cell microvilli which secrete eggshell material such as the vitelline membrane (PubMed:25236597). May be required for the normal expression of Cad99c in the follicle cell microvilli (PubMed:25236597).</text>
</comment>
<comment type="subunit">
    <text evidence="11 13 14">Homodimerizes in a two headed molecule through the formation of a coiled-coil rod (PubMed:16585515). Homodimers motility is approximately 8-10 times slower than that of myosin V, and its step size is 30 nm, which is consistent with the presence of five IQ motifs in its neck region (PubMed:16585515). Interacts with Cad99C (via the cytoplasmic domain) (PubMed:25236597, PubMed:27331610). Interacts with zip and Sans (PubMed:27331610).</text>
</comment>
<comment type="interaction">
    <interactant intactId="EBI-15762145">
        <id>Q9V3Z6</id>
    </interactant>
    <interactant intactId="EBI-187019">
        <id>Q9VAF5</id>
        <label>Cad99C</label>
    </interactant>
    <organismsDiffer>false</organismsDiffer>
    <experiments>5</experiments>
</comment>
<comment type="interaction">
    <interactant intactId="EBI-15762145">
        <id>Q9V3Z6</id>
    </interactant>
    <interactant intactId="EBI-182924">
        <id>P62152</id>
        <label>Cam</label>
    </interactant>
    <organismsDiffer>false</organismsDiffer>
    <experiments>3</experiments>
</comment>
<comment type="subcellular location">
    <subcellularLocation>
        <location evidence="10 13">Cytoplasm</location>
    </subcellularLocation>
    <subcellularLocation>
        <location evidence="13">Cytoplasm</location>
        <location evidence="13">Cell cortex</location>
    </subcellularLocation>
    <subcellularLocation>
        <location evidence="13">Cell projection</location>
        <location evidence="13">Microvillus</location>
    </subcellularLocation>
    <text evidence="10 13">In scolopale cells (radially organized units in the Johnston's organ), protein is concentrated along actin-rich scolopale rods and more apically near scolopale cell-cap cell junctions (PubMed:15886106). In neurons, protein is concentrated near the basal body where neurons are tethered to the scolopale cell (PubMed:15886106). In germline and associated somatic cells of the ovary, it has a punctate distribution and associates with specific F-actin cell structures (PubMed:25236597). In germline cells, expressed in the F-actin-rich cytocortex of the oocyte (from stage 3, peaking at stages 9 to 10a) and in the cortex of nurse cells (from stage 6) (PubMed:25236597). Expressed in the microvilli and terminal web of follicle cells (PubMed:25236597). High expression at the base of the follicle cell microvilli in the brush border (PubMed:25236597).</text>
</comment>
<comment type="tissue specificity">
    <text evidence="9">Expressed in the setae, micro- and macrochaetae on the head, thorax and wing.</text>
</comment>
<comment type="developmental stage">
    <text evidence="9 13">Throughout oogenesis expressed in the germline and associated somatic cells (at protein level) (PubMed:25236597). In germline cells of the germarium, expression levels peak during follicle formation and again from mid-oogenesis until late oogenesis (at protein level). Expressed both maternally and zygotically (PubMed:15579689). Expression peaks in 12-18 hour embryos, and continues at a constant low level of expression through to adults (PubMed:15579689).</text>
</comment>
<comment type="disruption phenotype">
    <text evidence="9 14">Flies exhibit altered morphology of setae, micro- and macrochaetae on the head, thorax and wing (PubMed:15579689). The number and distribution of setae on the thorax is altered, as is the morphology of the aristae (PubMed:15579689). Mutants also exhibit scolopidial apical detachment and overall Johnston's organ (JO) disorganization (PubMed:15579689). RNAi-mediated knockdown in Johnston's organs, disrupts the filamentous structure of the glycoprotein NompA at the apical junction (PubMed:27331610). NompA occurs as puncta and scolopidia detatch from the hinge of the second and third antennal segment (PubMed:27331610).</text>
</comment>
<comment type="similarity">
    <text evidence="15">Belongs to the TRAFAC class myosin-kinesin ATPase superfamily. Myosin family.</text>
</comment>
<keyword id="KW-0009">Actin-binding</keyword>
<keyword id="KW-0067">ATP-binding</keyword>
<keyword id="KW-0966">Cell projection</keyword>
<keyword id="KW-0175">Coiled coil</keyword>
<keyword id="KW-0963">Cytoplasm</keyword>
<keyword id="KW-0505">Motor protein</keyword>
<keyword id="KW-0518">Myosin</keyword>
<keyword id="KW-0547">Nucleotide-binding</keyword>
<keyword id="KW-0597">Phosphoprotein</keyword>
<keyword id="KW-1185">Reference proteome</keyword>
<keyword id="KW-0677">Repeat</keyword>
<keyword id="KW-0728">SH3 domain</keyword>
<protein>
    <recommendedName>
        <fullName>Myosin-VIIa</fullName>
        <shortName>DmVIIa</shortName>
    </recommendedName>
    <alternativeName>
        <fullName>Protein crinkled</fullName>
    </alternativeName>
</protein>